<evidence type="ECO:0000250" key="1">
    <source>
        <dbReference type="UniProtKB" id="Q9UI30"/>
    </source>
</evidence>
<evidence type="ECO:0000269" key="2">
    <source>
    </source>
</evidence>
<evidence type="ECO:0000269" key="3">
    <source>
    </source>
</evidence>
<evidence type="ECO:0000269" key="4">
    <source>
    </source>
</evidence>
<evidence type="ECO:0000305" key="5"/>
<feature type="chain" id="PRO_0000215798" description="Multifunctional methyltransferase subunit TRM112-like protein">
    <location>
        <begin position="1"/>
        <end position="125"/>
    </location>
</feature>
<feature type="domain" description="TRM112">
    <location>
        <begin position="2"/>
        <end position="119"/>
    </location>
</feature>
<feature type="sequence conflict" description="In Ref. 1; BAB22695." evidence="5" ref="1">
    <original>H</original>
    <variation>Q</variation>
    <location>
        <position position="85"/>
    </location>
</feature>
<feature type="sequence conflict" description="In Ref. 2; AAH16191." evidence="5" ref="2">
    <location>
        <position position="122"/>
    </location>
</feature>
<keyword id="KW-0963">Cytoplasm</keyword>
<keyword id="KW-0539">Nucleus</keyword>
<keyword id="KW-1185">Reference proteome</keyword>
<sequence>MKLLTHNLLSSHVRGVGTRGFPLRLQATEVRINPVEFNPEFVARMIPKVEWAALVQAADTLNLAEVPKEPTEGYEHDETFLRKMHHVLLEVDVLEGTLQCPESGRLFPISRGIPNMLLNDEETET</sequence>
<protein>
    <recommendedName>
        <fullName>Multifunctional methyltransferase subunit TRM112-like protein</fullName>
    </recommendedName>
    <alternativeName>
        <fullName>tRNA methyltransferase 112 homolog</fullName>
    </alternativeName>
</protein>
<gene>
    <name type="primary">Trmt112</name>
</gene>
<comment type="function">
    <text evidence="1 2 3">Acts as an activator of both rRNA/tRNA and protein methyltransferases (PubMed:20606008, PubMed:26797129). Together with methyltransferase BUD23, methylates the N(7) position of a guanine in 18S rRNA (By similarity). The heterodimer with HEMK2/N6AMT1 catalyzes N5-methylation of ETF1 on 'Gln-185', using S-adenosyl L-methionine as methyl donor (PubMed:20606008, PubMed:26797129). The heterodimer with ALKBH8 catalyzes the methylation of 5-carboxymethyl uridine to 5-methylcarboxymethyl uridine at the wobble position of the anticodon loop in target tRNA species (By similarity). Together with methyltransferase THUMPD3, catalyzes the formation of N(2)-methylguanosine at position 6 in a broad range of tRNA substrates and at position 7 of tRNA(Trp) (By similarity). Involved in the pre-rRNA processing steps leading to small-subunit rRNA production (By similarity). Together with methyltransferase METTL5, specifically methylates the 6th position of adenine in position 1832 of 18S rRNA (By similarity).</text>
</comment>
<comment type="subunit">
    <text evidence="1 3">Part of the heterodimeric BUD23-TRM112 methyltransferase complex; this heterodimerization is necessary for the metabolic stability and activity of the catalytic subunit BUD23 (By similarity). Part of the heterodimeric N6AMT1-TRM112 methyltransferase complex; this heterodimerization is necessary for S-adenosyl-L-methionine-binding to N6AMT1/HEMK2 (PubMed:26797129). Part of the heterodimeric ALKBH8-TRM112 methyltransferase complex. Part of the heterodimeric METTL5-TRM112 methyltransferase complex; this heterodimerization is necessary for the stability of the catalytic subunit METTL5. Part of the heterodimeric THUMPD3-TRM112 methyltransferase complex; this complex forms an active tRNA methyltransferase, where TRMT112 acts as an activator of the catalytic subunit THUMPD3. Part of the heterodimeric THUMPD2-TRM112 methyltransferase complex; this complex forms an active tRNA methyltransferase, where TRMT112 acts as an activator of the catalytic subunit THUMPD2. Part of the heterodimeric TRMT11-TRM112 methyltransferase complex; this complex forms an active tRNA methyltransferase, where TRMT112 acts as an activator of the catalytic subunit TRMT11 (By similarity).</text>
</comment>
<comment type="subcellular location">
    <subcellularLocation>
        <location evidence="1">Nucleus</location>
        <location evidence="1">Nucleoplasm</location>
    </subcellularLocation>
    <subcellularLocation>
        <location evidence="1">Cytoplasm</location>
        <location evidence="1">Perinuclear region</location>
    </subcellularLocation>
    <text evidence="1">Localizes to a polarized perinuclear structure, overlapping partially with the Golgi and lysosomes.</text>
</comment>
<comment type="tissue specificity">
    <text evidence="4">Abundantly expressed in the testis, also expressed in the brain, heart, kidney, liver, lung, muscle and spleen.</text>
</comment>
<comment type="similarity">
    <text evidence="5">Belongs to the TRM112 family.</text>
</comment>
<accession>Q9DCG9</accession>
<accession>Q91YP8</accession>
<accession>Q9D1N6</accession>
<dbReference type="EMBL" id="AK002791">
    <property type="protein sequence ID" value="BAB22361.1"/>
    <property type="molecule type" value="mRNA"/>
</dbReference>
<dbReference type="EMBL" id="AK003292">
    <property type="protein sequence ID" value="BAB22695.1"/>
    <property type="molecule type" value="mRNA"/>
</dbReference>
<dbReference type="EMBL" id="BC016191">
    <property type="protein sequence ID" value="AAH16191.1"/>
    <property type="molecule type" value="mRNA"/>
</dbReference>
<dbReference type="CCDS" id="CCDS29508.1"/>
<dbReference type="RefSeq" id="NP_001159842.1">
    <property type="nucleotide sequence ID" value="NM_001166370.1"/>
</dbReference>
<dbReference type="RefSeq" id="NP_080582.3">
    <property type="nucleotide sequence ID" value="NM_026306.3"/>
</dbReference>
<dbReference type="SMR" id="Q9DCG9"/>
<dbReference type="BioGRID" id="212357">
    <property type="interactions" value="12"/>
</dbReference>
<dbReference type="FunCoup" id="Q9DCG9">
    <property type="interactions" value="2136"/>
</dbReference>
<dbReference type="STRING" id="10090.ENSMUSP00000112250"/>
<dbReference type="iPTMnet" id="Q9DCG9"/>
<dbReference type="PhosphoSitePlus" id="Q9DCG9"/>
<dbReference type="SwissPalm" id="Q9DCG9"/>
<dbReference type="jPOST" id="Q9DCG9"/>
<dbReference type="PaxDb" id="10090-ENSMUSP00000112250"/>
<dbReference type="ProteomicsDB" id="259173"/>
<dbReference type="Pumba" id="Q9DCG9"/>
<dbReference type="Antibodypedia" id="29268">
    <property type="antibodies" value="89 antibodies from 18 providers"/>
</dbReference>
<dbReference type="Ensembl" id="ENSMUST00000088257.14">
    <property type="protein sequence ID" value="ENSMUSP00000085591.8"/>
    <property type="gene ID" value="ENSMUSG00000038812.17"/>
</dbReference>
<dbReference type="Ensembl" id="ENSMUST00000116551.10">
    <property type="protein sequence ID" value="ENSMUSP00000112250.4"/>
    <property type="gene ID" value="ENSMUSG00000038812.17"/>
</dbReference>
<dbReference type="GeneID" id="67674"/>
<dbReference type="KEGG" id="mmu:67674"/>
<dbReference type="UCSC" id="uc008gjd.2">
    <property type="organism name" value="mouse"/>
</dbReference>
<dbReference type="AGR" id="MGI:1914924"/>
<dbReference type="CTD" id="51504"/>
<dbReference type="MGI" id="MGI:1914924">
    <property type="gene designation" value="Trmt112"/>
</dbReference>
<dbReference type="VEuPathDB" id="HostDB:ENSMUSG00000038812"/>
<dbReference type="eggNOG" id="KOG1088">
    <property type="taxonomic scope" value="Eukaryota"/>
</dbReference>
<dbReference type="GeneTree" id="ENSGT00390000009268"/>
<dbReference type="HOGENOM" id="CLU_086140_2_0_1"/>
<dbReference type="InParanoid" id="Q9DCG9"/>
<dbReference type="OMA" id="NMLTSKC"/>
<dbReference type="OrthoDB" id="2187549at2759"/>
<dbReference type="PhylomeDB" id="Q9DCG9"/>
<dbReference type="TreeFam" id="TF313256"/>
<dbReference type="Reactome" id="R-MMU-156581">
    <property type="pathway name" value="Methylation"/>
</dbReference>
<dbReference type="Reactome" id="R-MMU-72764">
    <property type="pathway name" value="Eukaryotic Translation Termination"/>
</dbReference>
<dbReference type="BioGRID-ORCS" id="67674">
    <property type="hits" value="25 hits in 78 CRISPR screens"/>
</dbReference>
<dbReference type="ChiTaRS" id="Trmt112">
    <property type="organism name" value="mouse"/>
</dbReference>
<dbReference type="PRO" id="PR:Q9DCG9"/>
<dbReference type="Proteomes" id="UP000000589">
    <property type="component" value="Chromosome 19"/>
</dbReference>
<dbReference type="RNAct" id="Q9DCG9">
    <property type="molecule type" value="protein"/>
</dbReference>
<dbReference type="Bgee" id="ENSMUSG00000038812">
    <property type="expression patterns" value="Expressed in embryonic brain and 106 other cell types or tissues"/>
</dbReference>
<dbReference type="ExpressionAtlas" id="Q9DCG9">
    <property type="expression patterns" value="baseline and differential"/>
</dbReference>
<dbReference type="GO" id="GO:0005654">
    <property type="term" value="C:nucleoplasm"/>
    <property type="evidence" value="ECO:0000250"/>
    <property type="project" value="UniProtKB"/>
</dbReference>
<dbReference type="GO" id="GO:0048471">
    <property type="term" value="C:perinuclear region of cytoplasm"/>
    <property type="evidence" value="ECO:0000250"/>
    <property type="project" value="UniProtKB"/>
</dbReference>
<dbReference type="GO" id="GO:0032991">
    <property type="term" value="C:protein-containing complex"/>
    <property type="evidence" value="ECO:0000266"/>
    <property type="project" value="MGI"/>
</dbReference>
<dbReference type="GO" id="GO:0046982">
    <property type="term" value="F:protein heterodimerization activity"/>
    <property type="evidence" value="ECO:0000250"/>
    <property type="project" value="UniProtKB"/>
</dbReference>
<dbReference type="GO" id="GO:0008276">
    <property type="term" value="F:protein methyltransferase activity"/>
    <property type="evidence" value="ECO:0000266"/>
    <property type="project" value="MGI"/>
</dbReference>
<dbReference type="GO" id="GO:0141106">
    <property type="term" value="F:tRNA methyltransferase activator activity"/>
    <property type="evidence" value="ECO:0007669"/>
    <property type="project" value="Ensembl"/>
</dbReference>
<dbReference type="GO" id="GO:0018364">
    <property type="term" value="P:peptidyl-glutamine methylation"/>
    <property type="evidence" value="ECO:0000314"/>
    <property type="project" value="UniProtKB"/>
</dbReference>
<dbReference type="GO" id="GO:2000234">
    <property type="term" value="P:positive regulation of rRNA processing"/>
    <property type="evidence" value="ECO:0000250"/>
    <property type="project" value="UniProtKB"/>
</dbReference>
<dbReference type="GO" id="GO:0070476">
    <property type="term" value="P:rRNA (guanine-N7)-methylation"/>
    <property type="evidence" value="ECO:0000250"/>
    <property type="project" value="UniProtKB"/>
</dbReference>
<dbReference type="GO" id="GO:0031167">
    <property type="term" value="P:rRNA methylation"/>
    <property type="evidence" value="ECO:0000250"/>
    <property type="project" value="UniProtKB"/>
</dbReference>
<dbReference type="GO" id="GO:0045815">
    <property type="term" value="P:transcription initiation-coupled chromatin remodeling"/>
    <property type="evidence" value="ECO:0000250"/>
    <property type="project" value="UniProtKB"/>
</dbReference>
<dbReference type="GO" id="GO:0030488">
    <property type="term" value="P:tRNA methylation"/>
    <property type="evidence" value="ECO:0007669"/>
    <property type="project" value="Ensembl"/>
</dbReference>
<dbReference type="CDD" id="cd21089">
    <property type="entry name" value="Trm112-like"/>
    <property type="match status" value="1"/>
</dbReference>
<dbReference type="FunFam" id="2.20.25.10:FF:000015">
    <property type="entry name" value="Multifunctional methyltransferase subunit TRM112-like protein"/>
    <property type="match status" value="1"/>
</dbReference>
<dbReference type="Gene3D" id="2.20.25.10">
    <property type="match status" value="1"/>
</dbReference>
<dbReference type="InterPro" id="IPR039127">
    <property type="entry name" value="Trm112"/>
</dbReference>
<dbReference type="InterPro" id="IPR005651">
    <property type="entry name" value="Trm112-like"/>
</dbReference>
<dbReference type="PANTHER" id="PTHR12773:SF0">
    <property type="entry name" value="MULTIFUNCTIONAL METHYLTRANSFERASE SUBUNIT TRM112-LIKE PROTEIN"/>
    <property type="match status" value="1"/>
</dbReference>
<dbReference type="PANTHER" id="PTHR12773">
    <property type="entry name" value="UPF0315 PROTEIN-RELATED"/>
    <property type="match status" value="1"/>
</dbReference>
<dbReference type="Pfam" id="PF03966">
    <property type="entry name" value="Trm112p"/>
    <property type="match status" value="1"/>
</dbReference>
<dbReference type="SUPFAM" id="SSF158997">
    <property type="entry name" value="Trm112p-like"/>
    <property type="match status" value="1"/>
</dbReference>
<reference key="1">
    <citation type="journal article" date="2005" name="Science">
        <title>The transcriptional landscape of the mammalian genome.</title>
        <authorList>
            <person name="Carninci P."/>
            <person name="Kasukawa T."/>
            <person name="Katayama S."/>
            <person name="Gough J."/>
            <person name="Frith M.C."/>
            <person name="Maeda N."/>
            <person name="Oyama R."/>
            <person name="Ravasi T."/>
            <person name="Lenhard B."/>
            <person name="Wells C."/>
            <person name="Kodzius R."/>
            <person name="Shimokawa K."/>
            <person name="Bajic V.B."/>
            <person name="Brenner S.E."/>
            <person name="Batalov S."/>
            <person name="Forrest A.R."/>
            <person name="Zavolan M."/>
            <person name="Davis M.J."/>
            <person name="Wilming L.G."/>
            <person name="Aidinis V."/>
            <person name="Allen J.E."/>
            <person name="Ambesi-Impiombato A."/>
            <person name="Apweiler R."/>
            <person name="Aturaliya R.N."/>
            <person name="Bailey T.L."/>
            <person name="Bansal M."/>
            <person name="Baxter L."/>
            <person name="Beisel K.W."/>
            <person name="Bersano T."/>
            <person name="Bono H."/>
            <person name="Chalk A.M."/>
            <person name="Chiu K.P."/>
            <person name="Choudhary V."/>
            <person name="Christoffels A."/>
            <person name="Clutterbuck D.R."/>
            <person name="Crowe M.L."/>
            <person name="Dalla E."/>
            <person name="Dalrymple B.P."/>
            <person name="de Bono B."/>
            <person name="Della Gatta G."/>
            <person name="di Bernardo D."/>
            <person name="Down T."/>
            <person name="Engstrom P."/>
            <person name="Fagiolini M."/>
            <person name="Faulkner G."/>
            <person name="Fletcher C.F."/>
            <person name="Fukushima T."/>
            <person name="Furuno M."/>
            <person name="Futaki S."/>
            <person name="Gariboldi M."/>
            <person name="Georgii-Hemming P."/>
            <person name="Gingeras T.R."/>
            <person name="Gojobori T."/>
            <person name="Green R.E."/>
            <person name="Gustincich S."/>
            <person name="Harbers M."/>
            <person name="Hayashi Y."/>
            <person name="Hensch T.K."/>
            <person name="Hirokawa N."/>
            <person name="Hill D."/>
            <person name="Huminiecki L."/>
            <person name="Iacono M."/>
            <person name="Ikeo K."/>
            <person name="Iwama A."/>
            <person name="Ishikawa T."/>
            <person name="Jakt M."/>
            <person name="Kanapin A."/>
            <person name="Katoh M."/>
            <person name="Kawasawa Y."/>
            <person name="Kelso J."/>
            <person name="Kitamura H."/>
            <person name="Kitano H."/>
            <person name="Kollias G."/>
            <person name="Krishnan S.P."/>
            <person name="Kruger A."/>
            <person name="Kummerfeld S.K."/>
            <person name="Kurochkin I.V."/>
            <person name="Lareau L.F."/>
            <person name="Lazarevic D."/>
            <person name="Lipovich L."/>
            <person name="Liu J."/>
            <person name="Liuni S."/>
            <person name="McWilliam S."/>
            <person name="Madan Babu M."/>
            <person name="Madera M."/>
            <person name="Marchionni L."/>
            <person name="Matsuda H."/>
            <person name="Matsuzawa S."/>
            <person name="Miki H."/>
            <person name="Mignone F."/>
            <person name="Miyake S."/>
            <person name="Morris K."/>
            <person name="Mottagui-Tabar S."/>
            <person name="Mulder N."/>
            <person name="Nakano N."/>
            <person name="Nakauchi H."/>
            <person name="Ng P."/>
            <person name="Nilsson R."/>
            <person name="Nishiguchi S."/>
            <person name="Nishikawa S."/>
            <person name="Nori F."/>
            <person name="Ohara O."/>
            <person name="Okazaki Y."/>
            <person name="Orlando V."/>
            <person name="Pang K.C."/>
            <person name="Pavan W.J."/>
            <person name="Pavesi G."/>
            <person name="Pesole G."/>
            <person name="Petrovsky N."/>
            <person name="Piazza S."/>
            <person name="Reed J."/>
            <person name="Reid J.F."/>
            <person name="Ring B.Z."/>
            <person name="Ringwald M."/>
            <person name="Rost B."/>
            <person name="Ruan Y."/>
            <person name="Salzberg S.L."/>
            <person name="Sandelin A."/>
            <person name="Schneider C."/>
            <person name="Schoenbach C."/>
            <person name="Sekiguchi K."/>
            <person name="Semple C.A."/>
            <person name="Seno S."/>
            <person name="Sessa L."/>
            <person name="Sheng Y."/>
            <person name="Shibata Y."/>
            <person name="Shimada H."/>
            <person name="Shimada K."/>
            <person name="Silva D."/>
            <person name="Sinclair B."/>
            <person name="Sperling S."/>
            <person name="Stupka E."/>
            <person name="Sugiura K."/>
            <person name="Sultana R."/>
            <person name="Takenaka Y."/>
            <person name="Taki K."/>
            <person name="Tammoja K."/>
            <person name="Tan S.L."/>
            <person name="Tang S."/>
            <person name="Taylor M.S."/>
            <person name="Tegner J."/>
            <person name="Teichmann S.A."/>
            <person name="Ueda H.R."/>
            <person name="van Nimwegen E."/>
            <person name="Verardo R."/>
            <person name="Wei C.L."/>
            <person name="Yagi K."/>
            <person name="Yamanishi H."/>
            <person name="Zabarovsky E."/>
            <person name="Zhu S."/>
            <person name="Zimmer A."/>
            <person name="Hide W."/>
            <person name="Bult C."/>
            <person name="Grimmond S.M."/>
            <person name="Teasdale R.D."/>
            <person name="Liu E.T."/>
            <person name="Brusic V."/>
            <person name="Quackenbush J."/>
            <person name="Wahlestedt C."/>
            <person name="Mattick J.S."/>
            <person name="Hume D.A."/>
            <person name="Kai C."/>
            <person name="Sasaki D."/>
            <person name="Tomaru Y."/>
            <person name="Fukuda S."/>
            <person name="Kanamori-Katayama M."/>
            <person name="Suzuki M."/>
            <person name="Aoki J."/>
            <person name="Arakawa T."/>
            <person name="Iida J."/>
            <person name="Imamura K."/>
            <person name="Itoh M."/>
            <person name="Kato T."/>
            <person name="Kawaji H."/>
            <person name="Kawagashira N."/>
            <person name="Kawashima T."/>
            <person name="Kojima M."/>
            <person name="Kondo S."/>
            <person name="Konno H."/>
            <person name="Nakano K."/>
            <person name="Ninomiya N."/>
            <person name="Nishio T."/>
            <person name="Okada M."/>
            <person name="Plessy C."/>
            <person name="Shibata K."/>
            <person name="Shiraki T."/>
            <person name="Suzuki S."/>
            <person name="Tagami M."/>
            <person name="Waki K."/>
            <person name="Watahiki A."/>
            <person name="Okamura-Oho Y."/>
            <person name="Suzuki H."/>
            <person name="Kawai J."/>
            <person name="Hayashizaki Y."/>
        </authorList>
    </citation>
    <scope>NUCLEOTIDE SEQUENCE [LARGE SCALE MRNA]</scope>
    <source>
        <strain>C57BL/6J</strain>
        <tissue>Embryo</tissue>
        <tissue>Kidney</tissue>
    </source>
</reference>
<reference key="2">
    <citation type="journal article" date="2004" name="Genome Res.">
        <title>The status, quality, and expansion of the NIH full-length cDNA project: the Mammalian Gene Collection (MGC).</title>
        <authorList>
            <consortium name="The MGC Project Team"/>
        </authorList>
    </citation>
    <scope>NUCLEOTIDE SEQUENCE [LARGE SCALE MRNA]</scope>
</reference>
<reference key="3">
    <citation type="journal article" date="2010" name="Cell">
        <title>A tissue-specific atlas of mouse protein phosphorylation and expression.</title>
        <authorList>
            <person name="Huttlin E.L."/>
            <person name="Jedrychowski M.P."/>
            <person name="Elias J.E."/>
            <person name="Goswami T."/>
            <person name="Rad R."/>
            <person name="Beausoleil S.A."/>
            <person name="Villen J."/>
            <person name="Haas W."/>
            <person name="Sowa M.E."/>
            <person name="Gygi S.P."/>
        </authorList>
    </citation>
    <scope>IDENTIFICATION BY MASS SPECTROMETRY [LARGE SCALE ANALYSIS]</scope>
    <source>
        <tissue>Brain</tissue>
        <tissue>Kidney</tissue>
        <tissue>Lung</tissue>
        <tissue>Pancreas</tissue>
        <tissue>Spleen</tissue>
        <tissue>Testis</tissue>
    </source>
</reference>
<reference key="4">
    <citation type="journal article" date="2010" name="Mol. Cell. Biol.">
        <title>Deficiency in a glutamine-specific methyltransferase for release factor causes mouse embryonic lethality.</title>
        <authorList>
            <person name="Liu P."/>
            <person name="Nie S."/>
            <person name="Li B."/>
            <person name="Yang Z.Q."/>
            <person name="Xu Z.M."/>
            <person name="Fei J."/>
            <person name="Lin C."/>
            <person name="Zeng R."/>
            <person name="Xu G.L."/>
        </authorList>
    </citation>
    <scope>FUNCTION</scope>
</reference>
<reference key="5">
    <citation type="journal article" date="2016" name="J. Biol. Chem.">
        <title>Substrate specificity of the HEMK2 protein glutamine methyltransferase and identification of novel substrates.</title>
        <authorList>
            <person name="Kusevic D."/>
            <person name="Kudithipudi S."/>
            <person name="Jeltsch A."/>
        </authorList>
    </citation>
    <scope>FUNCTION</scope>
    <scope>INTERACTION WITH N6AMT1</scope>
</reference>
<reference key="6">
    <citation type="journal article" date="2021" name="Nucleic Acids Res.">
        <title>THUMPD3-TRMT112 is a m2G methyltransferase working on a broad range of tRNA substrates.</title>
        <authorList>
            <person name="Yang W.Q."/>
            <person name="Xiong Q.P."/>
            <person name="Ge J.Y."/>
            <person name="Li H."/>
            <person name="Zhu W.Y."/>
            <person name="Nie Y."/>
            <person name="Lin X."/>
            <person name="Lv D."/>
            <person name="Li J."/>
            <person name="Lin H."/>
            <person name="Liu R.J."/>
        </authorList>
    </citation>
    <scope>TISSUE SPECIFICITY</scope>
</reference>
<organism>
    <name type="scientific">Mus musculus</name>
    <name type="common">Mouse</name>
    <dbReference type="NCBI Taxonomy" id="10090"/>
    <lineage>
        <taxon>Eukaryota</taxon>
        <taxon>Metazoa</taxon>
        <taxon>Chordata</taxon>
        <taxon>Craniata</taxon>
        <taxon>Vertebrata</taxon>
        <taxon>Euteleostomi</taxon>
        <taxon>Mammalia</taxon>
        <taxon>Eutheria</taxon>
        <taxon>Euarchontoglires</taxon>
        <taxon>Glires</taxon>
        <taxon>Rodentia</taxon>
        <taxon>Myomorpha</taxon>
        <taxon>Muroidea</taxon>
        <taxon>Muridae</taxon>
        <taxon>Murinae</taxon>
        <taxon>Mus</taxon>
        <taxon>Mus</taxon>
    </lineage>
</organism>
<proteinExistence type="evidence at protein level"/>
<name>TR112_MOUSE</name>